<proteinExistence type="evidence at protein level"/>
<accession>Q42400</accession>
<accession>O48546</accession>
<reference key="1">
    <citation type="journal article" date="1993" name="Proc. Natl. Acad. Sci. U.S.A.">
        <title>Cloning a plant amino acid transporter by functional complementation of a yeast amino acid transport mutant.</title>
        <authorList>
            <person name="Hsu L.-C."/>
            <person name="Chiou T.-J."/>
            <person name="Chen L."/>
            <person name="Bush D.R."/>
        </authorList>
    </citation>
    <scope>NUCLEOTIDE SEQUENCE [GENOMIC DNA / MRNA]</scope>
    <scope>FUNCTION</scope>
    <scope>BIOPHYSICOCHEMICAL PROPERTIES</scope>
</reference>
<reference key="2">
    <citation type="journal article" date="1993" name="Proc. Natl. Acad. Sci. U.S.A.">
        <title>Expression cloning in yeast of a cDNA encoding a broad specificity amino acid permease from Arabidopsis thaliana.</title>
        <authorList>
            <person name="Frommer W.B."/>
            <person name="Hummel S."/>
            <person name="Riesmeier J.W."/>
        </authorList>
    </citation>
    <scope>NUCLEOTIDE SEQUENCE [MRNA]</scope>
    <scope>FUNCTION</scope>
    <scope>BIOPHYSICOCHEMICAL PROPERTIES</scope>
</reference>
<reference key="3">
    <citation type="journal article" date="1999" name="Gene">
        <title>Isolation and analysis of cDNA within a 300 kb Arabidopsis thaliana genomic region located around the 100 map unit of chromosome 1.</title>
        <authorList>
            <person name="Kato A."/>
            <person name="Suzuki M."/>
            <person name="Kuwahara A."/>
            <person name="Ooe H."/>
            <person name="Higano-Inaba K."/>
            <person name="Komeda Y."/>
        </authorList>
    </citation>
    <scope>NUCLEOTIDE SEQUENCE [LARGE SCALE GENOMIC DNA]</scope>
</reference>
<reference key="4">
    <citation type="journal article" date="2000" name="Nature">
        <title>Sequence and analysis of chromosome 1 of the plant Arabidopsis thaliana.</title>
        <authorList>
            <person name="Theologis A."/>
            <person name="Ecker J.R."/>
            <person name="Palm C.J."/>
            <person name="Federspiel N.A."/>
            <person name="Kaul S."/>
            <person name="White O."/>
            <person name="Alonso J."/>
            <person name="Altafi H."/>
            <person name="Araujo R."/>
            <person name="Bowman C.L."/>
            <person name="Brooks S.Y."/>
            <person name="Buehler E."/>
            <person name="Chan A."/>
            <person name="Chao Q."/>
            <person name="Chen H."/>
            <person name="Cheuk R.F."/>
            <person name="Chin C.W."/>
            <person name="Chung M.K."/>
            <person name="Conn L."/>
            <person name="Conway A.B."/>
            <person name="Conway A.R."/>
            <person name="Creasy T.H."/>
            <person name="Dewar K."/>
            <person name="Dunn P."/>
            <person name="Etgu P."/>
            <person name="Feldblyum T.V."/>
            <person name="Feng J.-D."/>
            <person name="Fong B."/>
            <person name="Fujii C.Y."/>
            <person name="Gill J.E."/>
            <person name="Goldsmith A.D."/>
            <person name="Haas B."/>
            <person name="Hansen N.F."/>
            <person name="Hughes B."/>
            <person name="Huizar L."/>
            <person name="Hunter J.L."/>
            <person name="Jenkins J."/>
            <person name="Johnson-Hopson C."/>
            <person name="Khan S."/>
            <person name="Khaykin E."/>
            <person name="Kim C.J."/>
            <person name="Koo H.L."/>
            <person name="Kremenetskaia I."/>
            <person name="Kurtz D.B."/>
            <person name="Kwan A."/>
            <person name="Lam B."/>
            <person name="Langin-Hooper S."/>
            <person name="Lee A."/>
            <person name="Lee J.M."/>
            <person name="Lenz C.A."/>
            <person name="Li J.H."/>
            <person name="Li Y.-P."/>
            <person name="Lin X."/>
            <person name="Liu S.X."/>
            <person name="Liu Z.A."/>
            <person name="Luros J.S."/>
            <person name="Maiti R."/>
            <person name="Marziali A."/>
            <person name="Militscher J."/>
            <person name="Miranda M."/>
            <person name="Nguyen M."/>
            <person name="Nierman W.C."/>
            <person name="Osborne B.I."/>
            <person name="Pai G."/>
            <person name="Peterson J."/>
            <person name="Pham P.K."/>
            <person name="Rizzo M."/>
            <person name="Rooney T."/>
            <person name="Rowley D."/>
            <person name="Sakano H."/>
            <person name="Salzberg S.L."/>
            <person name="Schwartz J.R."/>
            <person name="Shinn P."/>
            <person name="Southwick A.M."/>
            <person name="Sun H."/>
            <person name="Tallon L.J."/>
            <person name="Tambunga G."/>
            <person name="Toriumi M.J."/>
            <person name="Town C.D."/>
            <person name="Utterback T."/>
            <person name="Van Aken S."/>
            <person name="Vaysberg M."/>
            <person name="Vysotskaia V.S."/>
            <person name="Walker M."/>
            <person name="Wu D."/>
            <person name="Yu G."/>
            <person name="Fraser C.M."/>
            <person name="Venter J.C."/>
            <person name="Davis R.W."/>
        </authorList>
    </citation>
    <scope>NUCLEOTIDE SEQUENCE [LARGE SCALE GENOMIC DNA]</scope>
    <source>
        <strain>cv. Columbia</strain>
    </source>
</reference>
<reference key="5">
    <citation type="journal article" date="2017" name="Plant J.">
        <title>Araport11: a complete reannotation of the Arabidopsis thaliana reference genome.</title>
        <authorList>
            <person name="Cheng C.Y."/>
            <person name="Krishnakumar V."/>
            <person name="Chan A.P."/>
            <person name="Thibaud-Nissen F."/>
            <person name="Schobel S."/>
            <person name="Town C.D."/>
        </authorList>
    </citation>
    <scope>GENOME REANNOTATION</scope>
    <source>
        <strain>cv. Columbia</strain>
    </source>
</reference>
<reference key="6">
    <citation type="journal article" date="1993" name="Plant J.">
        <title>Differential expression of two related amino acid transporters with differing substrate specificity in Arabidopsis thaliana.</title>
        <authorList>
            <person name="Kwart M."/>
            <person name="Hirner B."/>
            <person name="Hummel S."/>
            <person name="Frommer W.B."/>
        </authorList>
    </citation>
    <scope>FUNCTION</scope>
    <scope>TISSUE SPECIFICITY</scope>
</reference>
<reference key="7">
    <citation type="journal article" date="1995" name="J. Biol. Chem.">
        <title>Substrate specificity and expression profile of amino acid transporters (AAPs) in Arabidopsis.</title>
        <authorList>
            <person name="Fischer W.-N."/>
            <person name="Kwart M."/>
            <person name="Hummel S."/>
            <person name="Frommer W.B."/>
        </authorList>
    </citation>
    <scope>FUNCTION</scope>
    <scope>TISSUE SPECIFICITY</scope>
</reference>
<reference key="8">
    <citation type="journal article" date="1996" name="J. Biol. Chem.">
        <title>Kinetics and specificity of a H+/amino acid transporter from Arabidopsis thaliana.</title>
        <authorList>
            <person name="Boorer K.J."/>
            <person name="Frommer W.B."/>
            <person name="Bush D.R."/>
            <person name="Kreman M."/>
            <person name="Loo D.D.F."/>
            <person name="Wright E.M."/>
        </authorList>
    </citation>
    <scope>CHARACTERIZATION</scope>
</reference>
<reference key="9">
    <citation type="journal article" date="1997" name="J. Biol. Chem.">
        <title>Topology of NAT2, a prototypical example of a new family of amino acid transporters.</title>
        <authorList>
            <person name="Chang H.-C."/>
            <person name="Bush D.R."/>
        </authorList>
    </citation>
    <scope>TOPOLOGY</scope>
</reference>
<reference key="10">
    <citation type="journal article" date="1998" name="Plant J.">
        <title>Developmental control of H+/amino acid permease gene expression during seed development of Arabidopsis.</title>
        <authorList>
            <person name="Hirner B."/>
            <person name="Fischer W.-N."/>
            <person name="Rentsch D."/>
            <person name="Kwart M."/>
            <person name="Frommer W.B."/>
        </authorList>
    </citation>
    <scope>DEVELOPMENTAL STAGE</scope>
    <scope>TISSUE SPECIFICITY</scope>
</reference>
<reference key="11">
    <citation type="journal article" date="2002" name="J. Biol. Chem.">
        <title>High affinity amino acid transporters specifically expressed in xylem parenchyma and developing seeds of Arabidopsis.</title>
        <authorList>
            <person name="Okumoto S."/>
            <person name="Schmidt R."/>
            <person name="Tegeder M."/>
            <person name="Fischer W.-N."/>
            <person name="Rentsch D."/>
            <person name="Frommer W.B."/>
            <person name="Koch W."/>
        </authorList>
    </citation>
    <scope>BIOPHYSICOCHEMICAL PROPERTIES</scope>
</reference>
<reference key="12">
    <citation type="journal article" date="2002" name="Plant J.">
        <title>Low and high affinity amino acid H+-cotransporters for cellular import of neutral and charged amino acids.</title>
        <authorList>
            <person name="Fischer W.-N."/>
            <person name="Loo D.D.F."/>
            <person name="Koch W."/>
            <person name="Ludewig U."/>
            <person name="Boorer K.J."/>
            <person name="Tegeder M."/>
            <person name="Rentsch D."/>
            <person name="Wright E.M."/>
            <person name="Frommer W.B."/>
        </authorList>
    </citation>
    <scope>CHARACTERIZATION</scope>
</reference>
<reference key="13">
    <citation type="journal article" date="2007" name="Plant J.">
        <title>AAP1 transports uncharged amino acids into roots of Arabidopsis.</title>
        <authorList>
            <person name="Lee Y.-H."/>
            <person name="Foster J."/>
            <person name="Chen J."/>
            <person name="Voll L.M."/>
            <person name="Weber A.P.M."/>
            <person name="Tegeder M."/>
        </authorList>
    </citation>
    <scope>FUNCTION</scope>
    <scope>TISSUE SPECIFICITY</scope>
    <scope>SUBCELLULAR LOCATION</scope>
</reference>
<reference key="14">
    <citation type="journal article" date="2009" name="Plant J.">
        <title>AAP1 regulates import of amino acids into developing Arabidopsis embryos.</title>
        <authorList>
            <person name="Sanders A."/>
            <person name="Collier R."/>
            <person name="Trethewy A."/>
            <person name="Gould G."/>
            <person name="Sieker R."/>
            <person name="Tegeder M."/>
        </authorList>
    </citation>
    <scope>FUNCTION</scope>
    <scope>TISSUE SPECIFICITY</scope>
    <scope>DISRUPTION PHENOTYPE</scope>
</reference>
<sequence>MKSFNTEGHNHSTAESGDAYTVSDPTKNVDEDGREKRTGTWLTASAHIITAVIGSGVLSLAWAIAQLGWIAGTSILLIFSFITYFTSTMLADCYRAPDPVTGKRNYTYMDVVRSYLGGRKVQLCGVAQYGNLIGVTVGYTITASISLVAVGKSNCFHDKGHTADCTISNYPYMAVFGIIQVILSQIPNFHKLSFLSIMAAVMSFTYATIGIGLAIATVAGGKVGKTSMTGTAVGVDVTAAQKIWRSFQAVGDIAFAYAYATVLIEIQDTLRSSPAENKAMKRASLVGVSTTTFFYILCGCIGYAAFGNNAPGDFLTDFGFFEPFWLIDFANACIAVHLIGAYQVFAQPIFQFVEKKCNRNYPDNKFITSEYSVNVPFLGKFNISLFRLVWRTAYVVITTVVAMIFPFFNAILGLIGAASFWPLTVYFPVEMHIAQTKIKKYSARWIALKTMCYVCLIVSLLAAAGSIAGLISSVKTYKPFRTMHE</sequence>
<evidence type="ECO:0000255" key="1"/>
<evidence type="ECO:0000256" key="2">
    <source>
        <dbReference type="SAM" id="MobiDB-lite"/>
    </source>
</evidence>
<evidence type="ECO:0000269" key="3">
    <source>
    </source>
</evidence>
<evidence type="ECO:0000269" key="4">
    <source>
    </source>
</evidence>
<evidence type="ECO:0000269" key="5">
    <source>
    </source>
</evidence>
<evidence type="ECO:0000269" key="6">
    <source>
    </source>
</evidence>
<evidence type="ECO:0000269" key="7">
    <source>
    </source>
</evidence>
<evidence type="ECO:0000269" key="8">
    <source>
    </source>
</evidence>
<evidence type="ECO:0000269" key="9">
    <source>
    </source>
</evidence>
<evidence type="ECO:0000269" key="10">
    <source>
    </source>
</evidence>
<evidence type="ECO:0000269" key="11">
    <source>
    </source>
</evidence>
<evidence type="ECO:0000305" key="12"/>
<evidence type="ECO:0000305" key="13">
    <source>
    </source>
</evidence>
<name>AAP1_ARATH</name>
<dbReference type="EMBL" id="L16240">
    <property type="protein sequence ID" value="AAA32726.1"/>
    <property type="molecule type" value="mRNA"/>
</dbReference>
<dbReference type="EMBL" id="AF031649">
    <property type="protein sequence ID" value="AAB87674.1"/>
    <property type="molecule type" value="Genomic_DNA"/>
</dbReference>
<dbReference type="EMBL" id="X67124">
    <property type="protein sequence ID" value="CAA47603.1"/>
    <property type="molecule type" value="mRNA"/>
</dbReference>
<dbReference type="EMBL" id="AB077822">
    <property type="protein sequence ID" value="BAB83868.1"/>
    <property type="molecule type" value="Genomic_DNA"/>
</dbReference>
<dbReference type="EMBL" id="AC008051">
    <property type="protein sequence ID" value="AAF82252.1"/>
    <property type="molecule type" value="Genomic_DNA"/>
</dbReference>
<dbReference type="EMBL" id="CP002684">
    <property type="protein sequence ID" value="AEE33541.1"/>
    <property type="molecule type" value="Genomic_DNA"/>
</dbReference>
<dbReference type="PIR" id="A48187">
    <property type="entry name" value="A48187"/>
</dbReference>
<dbReference type="RefSeq" id="NP_176132.1">
    <property type="nucleotide sequence ID" value="NM_104616.5"/>
</dbReference>
<dbReference type="FunCoup" id="Q42400">
    <property type="interactions" value="1"/>
</dbReference>
<dbReference type="STRING" id="3702.Q42400"/>
<dbReference type="TCDB" id="2.A.18.2.1">
    <property type="family name" value="the amino acid/auxin permease (aaap) family"/>
</dbReference>
<dbReference type="PaxDb" id="3702-AT1G58360.1"/>
<dbReference type="ProteomicsDB" id="244335"/>
<dbReference type="EnsemblPlants" id="AT1G58360.1">
    <property type="protein sequence ID" value="AT1G58360.1"/>
    <property type="gene ID" value="AT1G58360"/>
</dbReference>
<dbReference type="GeneID" id="842205"/>
<dbReference type="Gramene" id="AT1G58360.1">
    <property type="protein sequence ID" value="AT1G58360.1"/>
    <property type="gene ID" value="AT1G58360"/>
</dbReference>
<dbReference type="KEGG" id="ath:AT1G58360"/>
<dbReference type="Araport" id="AT1G58360"/>
<dbReference type="TAIR" id="AT1G58360">
    <property type="gene designation" value="AAP1"/>
</dbReference>
<dbReference type="eggNOG" id="KOG1303">
    <property type="taxonomic scope" value="Eukaryota"/>
</dbReference>
<dbReference type="HOGENOM" id="CLU_031247_4_1_1"/>
<dbReference type="InParanoid" id="Q42400"/>
<dbReference type="OMA" id="ACIFTFF"/>
<dbReference type="OrthoDB" id="40134at2759"/>
<dbReference type="PhylomeDB" id="Q42400"/>
<dbReference type="BioCyc" id="MetaCyc:AT1G58360-MONOMER"/>
<dbReference type="SABIO-RK" id="Q42400"/>
<dbReference type="PRO" id="PR:Q42400"/>
<dbReference type="Proteomes" id="UP000006548">
    <property type="component" value="Chromosome 1"/>
</dbReference>
<dbReference type="ExpressionAtlas" id="Q42400">
    <property type="expression patterns" value="baseline and differential"/>
</dbReference>
<dbReference type="GO" id="GO:0005886">
    <property type="term" value="C:plasma membrane"/>
    <property type="evidence" value="ECO:0000314"/>
    <property type="project" value="TAIR"/>
</dbReference>
<dbReference type="GO" id="GO:0015171">
    <property type="term" value="F:amino acid transmembrane transporter activity"/>
    <property type="evidence" value="ECO:0000315"/>
    <property type="project" value="TAIR"/>
</dbReference>
<dbReference type="GO" id="GO:0015180">
    <property type="term" value="F:L-alanine transmembrane transporter activity"/>
    <property type="evidence" value="ECO:0000315"/>
    <property type="project" value="TAIR"/>
</dbReference>
<dbReference type="GO" id="GO:0005313">
    <property type="term" value="F:L-glutamate transmembrane transporter activity"/>
    <property type="evidence" value="ECO:0000315"/>
    <property type="project" value="TAIR"/>
</dbReference>
<dbReference type="GO" id="GO:0015186">
    <property type="term" value="F:L-glutamine transmembrane transporter activity"/>
    <property type="evidence" value="ECO:0000315"/>
    <property type="project" value="TAIR"/>
</dbReference>
<dbReference type="GO" id="GO:0015193">
    <property type="term" value="F:L-proline transmembrane transporter activity"/>
    <property type="evidence" value="ECO:0000315"/>
    <property type="project" value="TAIR"/>
</dbReference>
<dbReference type="GO" id="GO:0015194">
    <property type="term" value="F:L-serine transmembrane transporter activity"/>
    <property type="evidence" value="ECO:0000315"/>
    <property type="project" value="TAIR"/>
</dbReference>
<dbReference type="GO" id="GO:0015293">
    <property type="term" value="F:symporter activity"/>
    <property type="evidence" value="ECO:0007669"/>
    <property type="project" value="UniProtKB-KW"/>
</dbReference>
<dbReference type="GO" id="GO:0043090">
    <property type="term" value="P:amino acid import"/>
    <property type="evidence" value="ECO:0000315"/>
    <property type="project" value="TAIR"/>
</dbReference>
<dbReference type="GO" id="GO:0015808">
    <property type="term" value="P:L-alanine transport"/>
    <property type="evidence" value="ECO:0000315"/>
    <property type="project" value="TAIR"/>
</dbReference>
<dbReference type="GO" id="GO:0098712">
    <property type="term" value="P:L-glutamate import across plasma membrane"/>
    <property type="evidence" value="ECO:0000315"/>
    <property type="project" value="TAIR"/>
</dbReference>
<dbReference type="GO" id="GO:0009624">
    <property type="term" value="P:response to nematode"/>
    <property type="evidence" value="ECO:0007007"/>
    <property type="project" value="TAIR"/>
</dbReference>
<dbReference type="FunFam" id="1.20.1740.10:FF:000055">
    <property type="entry name" value="Amino acid permease 6"/>
    <property type="match status" value="1"/>
</dbReference>
<dbReference type="InterPro" id="IPR013057">
    <property type="entry name" value="AA_transpt_TM"/>
</dbReference>
<dbReference type="PANTHER" id="PTHR48017">
    <property type="entry name" value="OS05G0424000 PROTEIN-RELATED"/>
    <property type="match status" value="1"/>
</dbReference>
<dbReference type="Pfam" id="PF01490">
    <property type="entry name" value="Aa_trans"/>
    <property type="match status" value="1"/>
</dbReference>
<protein>
    <recommendedName>
        <fullName>Amino acid permease 1</fullName>
    </recommendedName>
    <alternativeName>
        <fullName>Amino acid transporter AAP1</fullName>
    </alternativeName>
    <alternativeName>
        <fullName>Neutral amino acid transporter II</fullName>
    </alternativeName>
</protein>
<organism>
    <name type="scientific">Arabidopsis thaliana</name>
    <name type="common">Mouse-ear cress</name>
    <dbReference type="NCBI Taxonomy" id="3702"/>
    <lineage>
        <taxon>Eukaryota</taxon>
        <taxon>Viridiplantae</taxon>
        <taxon>Streptophyta</taxon>
        <taxon>Embryophyta</taxon>
        <taxon>Tracheophyta</taxon>
        <taxon>Spermatophyta</taxon>
        <taxon>Magnoliopsida</taxon>
        <taxon>eudicotyledons</taxon>
        <taxon>Gunneridae</taxon>
        <taxon>Pentapetalae</taxon>
        <taxon>rosids</taxon>
        <taxon>malvids</taxon>
        <taxon>Brassicales</taxon>
        <taxon>Brassicaceae</taxon>
        <taxon>Camelineae</taxon>
        <taxon>Arabidopsis</taxon>
    </lineage>
</organism>
<keyword id="KW-0029">Amino-acid transport</keyword>
<keyword id="KW-1003">Cell membrane</keyword>
<keyword id="KW-0472">Membrane</keyword>
<keyword id="KW-1185">Reference proteome</keyword>
<keyword id="KW-0769">Symport</keyword>
<keyword id="KW-0812">Transmembrane</keyword>
<keyword id="KW-1133">Transmembrane helix</keyword>
<keyword id="KW-0813">Transport</keyword>
<feature type="chain" id="PRO_0000387499" description="Amino acid permease 1">
    <location>
        <begin position="1"/>
        <end position="485"/>
    </location>
</feature>
<feature type="topological domain" description="Cytoplasmic" evidence="10">
    <location>
        <begin position="1"/>
        <end position="40"/>
    </location>
</feature>
<feature type="transmembrane region" description="Helical" evidence="1">
    <location>
        <begin position="41"/>
        <end position="61"/>
    </location>
</feature>
<feature type="transmembrane region" description="Helical" evidence="1">
    <location>
        <begin position="62"/>
        <end position="82"/>
    </location>
</feature>
<feature type="topological domain" description="Cytoplasmic" evidence="13">
    <location>
        <begin position="83"/>
        <end position="129"/>
    </location>
</feature>
<feature type="transmembrane region" description="Helical" evidence="1">
    <location>
        <begin position="130"/>
        <end position="150"/>
    </location>
</feature>
<feature type="topological domain" description="Extracellular" evidence="13">
    <location>
        <begin position="151"/>
        <end position="166"/>
    </location>
</feature>
<feature type="transmembrane region" description="Helical" evidence="1">
    <location>
        <begin position="167"/>
        <end position="187"/>
    </location>
</feature>
<feature type="topological domain" description="Cytoplasmic" evidence="13">
    <location>
        <begin position="188"/>
        <end position="194"/>
    </location>
</feature>
<feature type="transmembrane region" description="Helical" evidence="1">
    <location>
        <begin position="195"/>
        <end position="215"/>
    </location>
</feature>
<feature type="topological domain" description="Extracellular" evidence="13">
    <location>
        <begin position="216"/>
        <end position="245"/>
    </location>
</feature>
<feature type="transmembrane region" description="Helical" evidence="1">
    <location>
        <begin position="246"/>
        <end position="266"/>
    </location>
</feature>
<feature type="topological domain" description="Cytoplasmic" evidence="13">
    <location>
        <begin position="267"/>
        <end position="285"/>
    </location>
</feature>
<feature type="transmembrane region" description="Helical" evidence="1">
    <location>
        <begin position="286"/>
        <end position="306"/>
    </location>
</feature>
<feature type="topological domain" description="Extracellular" evidence="13">
    <location>
        <begin position="307"/>
        <end position="318"/>
    </location>
</feature>
<feature type="transmembrane region" description="Helical" evidence="1">
    <location>
        <begin position="319"/>
        <end position="339"/>
    </location>
</feature>
<feature type="topological domain" description="Cytoplasmic" evidence="13">
    <location>
        <begin position="340"/>
        <end position="394"/>
    </location>
</feature>
<feature type="transmembrane region" description="Helical" evidence="1">
    <location>
        <begin position="395"/>
        <end position="415"/>
    </location>
</feature>
<feature type="transmembrane region" description="Helical" evidence="1">
    <location>
        <begin position="416"/>
        <end position="436"/>
    </location>
</feature>
<feature type="topological domain" description="Cytoplasmic" evidence="13">
    <location>
        <begin position="437"/>
        <end position="450"/>
    </location>
</feature>
<feature type="transmembrane region" description="Helical" evidence="1">
    <location>
        <begin position="451"/>
        <end position="471"/>
    </location>
</feature>
<feature type="topological domain" description="Extracellular" evidence="10">
    <location>
        <begin position="472"/>
        <end position="485"/>
    </location>
</feature>
<feature type="region of interest" description="Disordered" evidence="2">
    <location>
        <begin position="1"/>
        <end position="35"/>
    </location>
</feature>
<feature type="compositionally biased region" description="Polar residues" evidence="2">
    <location>
        <begin position="1"/>
        <end position="15"/>
    </location>
</feature>
<feature type="sequence conflict" description="In Ref. 1; AAB87674." evidence="12" ref="1">
    <original>D</original>
    <variation>Y</variation>
    <location>
        <position position="252"/>
    </location>
</feature>
<gene>
    <name type="primary">AAP1</name>
    <name type="synonym">NAT2</name>
    <name type="ordered locus">At1g58360</name>
    <name type="ORF">F19C14.3</name>
    <name type="ORF">ZCF54</name>
</gene>
<comment type="function">
    <text evidence="4 5 6 7 8 9">Amino acid-proton symporter. Stereospecific transporter with a broad specificity for histidine, glutamate and neutral amino acids. Reduced affinities for asparagine and valine. Involved in amino acid uptake from the apoplastic cavity into the embryo cells for storage protein accumulation and in root amino acid uptake.</text>
</comment>
<comment type="activity regulation">
    <text>Inhibited by carbonylcyanide m-chlorophenylhydrazone and diethylpyrocarbonate (DEPC).</text>
</comment>
<comment type="biophysicochemical properties">
    <kinetics>
        <KM evidence="3 8 9">292 uM for alanine</KM>
        <KM evidence="3 8 9">60 uM for L-proline</KM>
        <KM evidence="3 8 9">774 uM for aspartate</KM>
        <Vmax evidence="3 8 9">0.644 nmol/min/mg enzyme toward aspartate</Vmax>
    </kinetics>
    <phDependence>
        <text evidence="3 8 9">Optimum pH is acidic.</text>
    </phDependence>
</comment>
<comment type="subcellular location">
    <subcellularLocation>
        <location evidence="4">Cell membrane</location>
        <topology evidence="4">Multi-pass membrane protein</topology>
    </subcellularLocation>
</comment>
<comment type="tissue specificity">
    <text evidence="4 5 6 7 11">Highly expressed in developing pods. Found in the endosperm and in the storage parenchyma and the outer epidermis cells of the developing embryo. Lower levels of expression in flowers, in the vascular system of the cotyledon and in the root epidermal cells, including root hairs and throughout the root tip.</text>
</comment>
<comment type="developmental stage">
    <text evidence="11">Expressed in endosperm during early stages of seed development. Strongly induced at heart stage of embryogenesis.</text>
</comment>
<comment type="disruption phenotype">
    <text evidence="5">No effect on plant growth or seed germination, but reduced seed weight and total seed yield. Resistant to toxic concentrations of amino acids in the growth medium.</text>
</comment>
<comment type="similarity">
    <text evidence="12">Belongs to the amino acid/polyamine transporter 2 family. Amino acid/auxin permease (AAAP) (TC 2.A.18.2) subfamily.</text>
</comment>